<reference key="1">
    <citation type="submission" date="2008-05" db="EMBL/GenBank/DDBJ databases">
        <title>Complete sequence of Shigella boydii serotype 18 strain BS512.</title>
        <authorList>
            <person name="Rasko D.A."/>
            <person name="Rosovitz M."/>
            <person name="Maurelli A.T."/>
            <person name="Myers G."/>
            <person name="Seshadri R."/>
            <person name="Cer R."/>
            <person name="Jiang L."/>
            <person name="Ravel J."/>
            <person name="Sebastian Y."/>
        </authorList>
    </citation>
    <scope>NUCLEOTIDE SEQUENCE [LARGE SCALE GENOMIC DNA]</scope>
    <source>
        <strain>CDC 3083-94 / BS512</strain>
    </source>
</reference>
<proteinExistence type="inferred from homology"/>
<protein>
    <recommendedName>
        <fullName evidence="1">Large ribosomal subunit protein uL3</fullName>
    </recommendedName>
    <alternativeName>
        <fullName evidence="2">50S ribosomal protein L3</fullName>
    </alternativeName>
</protein>
<organism>
    <name type="scientific">Shigella boydii serotype 18 (strain CDC 3083-94 / BS512)</name>
    <dbReference type="NCBI Taxonomy" id="344609"/>
    <lineage>
        <taxon>Bacteria</taxon>
        <taxon>Pseudomonadati</taxon>
        <taxon>Pseudomonadota</taxon>
        <taxon>Gammaproteobacteria</taxon>
        <taxon>Enterobacterales</taxon>
        <taxon>Enterobacteriaceae</taxon>
        <taxon>Shigella</taxon>
    </lineage>
</organism>
<comment type="function">
    <text evidence="1">One of the primary rRNA binding proteins, it binds directly near the 3'-end of the 23S rRNA, where it nucleates assembly of the 50S subunit.</text>
</comment>
<comment type="subunit">
    <text evidence="1">Part of the 50S ribosomal subunit. Forms a cluster with proteins L14 and L19.</text>
</comment>
<comment type="PTM">
    <text evidence="1">Methylated by PrmB.</text>
</comment>
<comment type="similarity">
    <text evidence="1">Belongs to the universal ribosomal protein uL3 family.</text>
</comment>
<sequence>MIGLVGKKVGMTRIFTEDGVSIPVTVIEVEANRVTQVKDLANDGYRAIQVTTGAKKANRVTKPEAGHFAKAGVEAGRGLWEFRLAEGEEFTVGQSISVELFADVKKVDVTGTSKGKGFAGTVKRWNFRTQDATHGNSLSHRVPGSIGQNQTPGKVFKGKKMAGQMGNERVTVQSLDVVRVDAERNLLLVKGAVPGATGSDLIVKPAVKA</sequence>
<gene>
    <name evidence="1" type="primary">rplC</name>
    <name type="ordered locus">SbBS512_E3705</name>
</gene>
<feature type="chain" id="PRO_1000141922" description="Large ribosomal subunit protein uL3">
    <location>
        <begin position="1"/>
        <end position="209"/>
    </location>
</feature>
<feature type="modified residue" description="N5-methylglutamine" evidence="1">
    <location>
        <position position="150"/>
    </location>
</feature>
<dbReference type="EMBL" id="CP001063">
    <property type="protein sequence ID" value="ACD09943.1"/>
    <property type="molecule type" value="Genomic_DNA"/>
</dbReference>
<dbReference type="RefSeq" id="WP_000579833.1">
    <property type="nucleotide sequence ID" value="NC_010658.1"/>
</dbReference>
<dbReference type="SMR" id="B2U2T8"/>
<dbReference type="STRING" id="344609.SbBS512_E3705"/>
<dbReference type="GeneID" id="86948184"/>
<dbReference type="KEGG" id="sbc:SbBS512_E3705"/>
<dbReference type="HOGENOM" id="CLU_044142_4_1_6"/>
<dbReference type="Proteomes" id="UP000001030">
    <property type="component" value="Chromosome"/>
</dbReference>
<dbReference type="GO" id="GO:0022625">
    <property type="term" value="C:cytosolic large ribosomal subunit"/>
    <property type="evidence" value="ECO:0007669"/>
    <property type="project" value="TreeGrafter"/>
</dbReference>
<dbReference type="GO" id="GO:0019843">
    <property type="term" value="F:rRNA binding"/>
    <property type="evidence" value="ECO:0007669"/>
    <property type="project" value="UniProtKB-UniRule"/>
</dbReference>
<dbReference type="GO" id="GO:0003735">
    <property type="term" value="F:structural constituent of ribosome"/>
    <property type="evidence" value="ECO:0007669"/>
    <property type="project" value="InterPro"/>
</dbReference>
<dbReference type="GO" id="GO:0006412">
    <property type="term" value="P:translation"/>
    <property type="evidence" value="ECO:0007669"/>
    <property type="project" value="UniProtKB-UniRule"/>
</dbReference>
<dbReference type="FunFam" id="2.40.30.10:FF:000004">
    <property type="entry name" value="50S ribosomal protein L3"/>
    <property type="match status" value="1"/>
</dbReference>
<dbReference type="FunFam" id="3.30.160.810:FF:000001">
    <property type="entry name" value="50S ribosomal protein L3"/>
    <property type="match status" value="1"/>
</dbReference>
<dbReference type="Gene3D" id="3.30.160.810">
    <property type="match status" value="1"/>
</dbReference>
<dbReference type="Gene3D" id="2.40.30.10">
    <property type="entry name" value="Translation factors"/>
    <property type="match status" value="1"/>
</dbReference>
<dbReference type="HAMAP" id="MF_01325_B">
    <property type="entry name" value="Ribosomal_uL3_B"/>
    <property type="match status" value="1"/>
</dbReference>
<dbReference type="InterPro" id="IPR000597">
    <property type="entry name" value="Ribosomal_uL3"/>
</dbReference>
<dbReference type="InterPro" id="IPR019927">
    <property type="entry name" value="Ribosomal_uL3_bac/org-type"/>
</dbReference>
<dbReference type="InterPro" id="IPR019926">
    <property type="entry name" value="Ribosomal_uL3_CS"/>
</dbReference>
<dbReference type="InterPro" id="IPR009000">
    <property type="entry name" value="Transl_B-barrel_sf"/>
</dbReference>
<dbReference type="NCBIfam" id="TIGR03625">
    <property type="entry name" value="L3_bact"/>
    <property type="match status" value="1"/>
</dbReference>
<dbReference type="PANTHER" id="PTHR11229">
    <property type="entry name" value="50S RIBOSOMAL PROTEIN L3"/>
    <property type="match status" value="1"/>
</dbReference>
<dbReference type="PANTHER" id="PTHR11229:SF16">
    <property type="entry name" value="LARGE RIBOSOMAL SUBUNIT PROTEIN UL3C"/>
    <property type="match status" value="1"/>
</dbReference>
<dbReference type="Pfam" id="PF00297">
    <property type="entry name" value="Ribosomal_L3"/>
    <property type="match status" value="1"/>
</dbReference>
<dbReference type="SUPFAM" id="SSF50447">
    <property type="entry name" value="Translation proteins"/>
    <property type="match status" value="1"/>
</dbReference>
<dbReference type="PROSITE" id="PS00474">
    <property type="entry name" value="RIBOSOMAL_L3"/>
    <property type="match status" value="1"/>
</dbReference>
<name>RL3_SHIB3</name>
<accession>B2U2T8</accession>
<evidence type="ECO:0000255" key="1">
    <source>
        <dbReference type="HAMAP-Rule" id="MF_01325"/>
    </source>
</evidence>
<evidence type="ECO:0000305" key="2"/>
<keyword id="KW-0488">Methylation</keyword>
<keyword id="KW-1185">Reference proteome</keyword>
<keyword id="KW-0687">Ribonucleoprotein</keyword>
<keyword id="KW-0689">Ribosomal protein</keyword>
<keyword id="KW-0694">RNA-binding</keyword>
<keyword id="KW-0699">rRNA-binding</keyword>